<dbReference type="EC" id="3.4.11.5"/>
<dbReference type="EMBL" id="D11037">
    <property type="protein sequence ID" value="BAA01792.1"/>
    <property type="molecule type" value="Genomic_DNA"/>
</dbReference>
<dbReference type="SMR" id="P46541"/>
<dbReference type="ChEMBL" id="CHEMBL2390809"/>
<dbReference type="ESTHER" id="bacco-pip">
    <property type="family name" value="Proline_iminopeptidase"/>
</dbReference>
<dbReference type="GO" id="GO:0005737">
    <property type="term" value="C:cytoplasm"/>
    <property type="evidence" value="ECO:0007669"/>
    <property type="project" value="UniProtKB-SubCell"/>
</dbReference>
<dbReference type="GO" id="GO:0016020">
    <property type="term" value="C:membrane"/>
    <property type="evidence" value="ECO:0007669"/>
    <property type="project" value="TreeGrafter"/>
</dbReference>
<dbReference type="GO" id="GO:0004177">
    <property type="term" value="F:aminopeptidase activity"/>
    <property type="evidence" value="ECO:0007669"/>
    <property type="project" value="UniProtKB-KW"/>
</dbReference>
<dbReference type="GO" id="GO:0006508">
    <property type="term" value="P:proteolysis"/>
    <property type="evidence" value="ECO:0007669"/>
    <property type="project" value="UniProtKB-KW"/>
</dbReference>
<dbReference type="Gene3D" id="3.40.50.1820">
    <property type="entry name" value="alpha/beta hydrolase"/>
    <property type="match status" value="1"/>
</dbReference>
<dbReference type="InterPro" id="IPR000073">
    <property type="entry name" value="AB_hydrolase_1"/>
</dbReference>
<dbReference type="InterPro" id="IPR029058">
    <property type="entry name" value="AB_hydrolase_fold"/>
</dbReference>
<dbReference type="InterPro" id="IPR050266">
    <property type="entry name" value="AB_hydrolase_sf"/>
</dbReference>
<dbReference type="InterPro" id="IPR002410">
    <property type="entry name" value="Peptidase_S33"/>
</dbReference>
<dbReference type="InterPro" id="IPR005945">
    <property type="entry name" value="Pro_imino_pep"/>
</dbReference>
<dbReference type="NCBIfam" id="TIGR01250">
    <property type="entry name" value="pro_imino_pep_2"/>
    <property type="match status" value="1"/>
</dbReference>
<dbReference type="PANTHER" id="PTHR43798:SF31">
    <property type="entry name" value="AB HYDROLASE SUPERFAMILY PROTEIN YCLE"/>
    <property type="match status" value="1"/>
</dbReference>
<dbReference type="PANTHER" id="PTHR43798">
    <property type="entry name" value="MONOACYLGLYCEROL LIPASE"/>
    <property type="match status" value="1"/>
</dbReference>
<dbReference type="Pfam" id="PF00561">
    <property type="entry name" value="Abhydrolase_1"/>
    <property type="match status" value="1"/>
</dbReference>
<dbReference type="PIRSF" id="PIRSF005539">
    <property type="entry name" value="Pept_S33_TRI_F1"/>
    <property type="match status" value="1"/>
</dbReference>
<dbReference type="PRINTS" id="PR00793">
    <property type="entry name" value="PROAMNOPTASE"/>
</dbReference>
<dbReference type="SUPFAM" id="SSF53474">
    <property type="entry name" value="alpha/beta-Hydrolases"/>
    <property type="match status" value="1"/>
</dbReference>
<organism>
    <name type="scientific">Heyndrickxia coagulans</name>
    <name type="common">Weizmannia coagulans</name>
    <dbReference type="NCBI Taxonomy" id="1398"/>
    <lineage>
        <taxon>Bacteria</taxon>
        <taxon>Bacillati</taxon>
        <taxon>Bacillota</taxon>
        <taxon>Bacilli</taxon>
        <taxon>Bacillales</taxon>
        <taxon>Bacillaceae</taxon>
        <taxon>Heyndrickxia</taxon>
    </lineage>
</organism>
<name>PIP_HEYCO</name>
<accession>P46541</accession>
<evidence type="ECO:0000250" key="1"/>
<evidence type="ECO:0000255" key="2"/>
<evidence type="ECO:0000269" key="3">
    <source>
    </source>
</evidence>
<evidence type="ECO:0000269" key="4">
    <source>
    </source>
</evidence>
<evidence type="ECO:0000269" key="5">
    <source>
    </source>
</evidence>
<evidence type="ECO:0000305" key="6"/>
<comment type="function">
    <text evidence="3 4">Releases the N-terminal proline from various substrates including at least dipeptides Pro-Pro, Pro-Gln, Pro-Trp and Pro-Tyr. Also acts on amides (Pro-beta NA) and oligopeptides including Pro-Leu-GlyNH2, Pro-Leu-Gly, Pro-Phe-Gly-Lys, Pro-Pro-Ala-OBut and Pro-Pro-Gly-(Pro-Pro-Gly)(4). Higher activity toward small peptides (up to three residues), but very low activity for longer peptides. Has no activity against p-nitrophenyl acetate, poly_L-proline, Met-Pro or amino acyl amides other than Pro-betaNA (Pyr-betaNA, Phe-betaNA, Cys-betaNA, Met-betaNA, Leu-betaNA, Ala-betaNA and Z-Gly-Pro-betaNA).</text>
</comment>
<comment type="catalytic activity">
    <reaction evidence="3 4 5">
        <text>Release of N-terminal proline from a peptide.</text>
        <dbReference type="EC" id="3.4.11.5"/>
    </reaction>
</comment>
<comment type="activity regulation">
    <text evidence="3 4">Completely inhibited by p-chloromercuribenzoate (PCMB) and heavy metal salts. Partially inhibited by proline and proline derivatives with proline as the amino terminus. Enzyme inactivated by PCMB is reactivated by incubation with 2-mercaptoethanol.</text>
</comment>
<comment type="biophysicochemical properties">
    <kinetics>
        <KM evidence="3 4">4.08 mM for Pro-Ala</KM>
        <KM evidence="3 4">1.16 mM for Pro-Asp</KM>
        <KM evidence="3 4">1.06 mM for Pro-Gly</KM>
        <KM evidence="3 4">0.91 mM for Pro-Lys</KM>
        <KM evidence="3 4">7.7 mM for Pro-Leu</KM>
        <KM evidence="3 4">1.5 mM for Pro-Phe</KM>
        <KM evidence="3 4">1.27 mM for Pro-Trp</KM>
        <KM evidence="3 4">0.95 mM for Pro-Tyr</KM>
        <KM evidence="3 4">0.26 mM for Pro-2-NNap</KM>
        <KM evidence="3 4">0.26 mM for Pro-pNA</KM>
        <KM evidence="3 4">27 mM for Pro-D-Ala</KM>
        <KM evidence="3 4">2.51 mM for Pro-D-Phe</KM>
        <KM evidence="3 4">6.35 mM for Pro-Leu-Gly-NH(2)</KM>
    </kinetics>
    <phDependence>
        <text evidence="3 4">Optimum pH is 8.0. Stable at pH 5.5-7.5. Most active at 7.3 with Pro-beta-naphthylamide (Pro-2-NNap) as the substrate. More than 85% of the activity remains between pH 6.5 and 7.5 after incubation for 15 minutes at 30 degrees Celsius and it retains 50% of the original activity after incubation at pH 7.0 and at 30 degrees Celsius for 30 minutes. 50% of the activity remains after 15 minutes preincubations at pH 8.0.</text>
    </phDependence>
    <temperatureDependence>
        <text evidence="3 4">Maximum activity at 40 degrees Celsius. Stable at temperatures up to 38 degrees Celsius.</text>
    </temperatureDependence>
</comment>
<comment type="subunit">
    <text evidence="4">Monomer.</text>
</comment>
<comment type="subcellular location">
    <subcellularLocation>
        <location evidence="6">Cytoplasm</location>
    </subcellularLocation>
</comment>
<comment type="similarity">
    <text evidence="6">Belongs to the peptidase S33 family.</text>
</comment>
<feature type="chain" id="PRO_0000080835" description="Proline iminopeptidase">
    <location>
        <begin position="1"/>
        <end position="288"/>
    </location>
</feature>
<feature type="domain" description="AB hydrolase-1" evidence="2">
    <location>
        <begin position="27"/>
        <end position="274"/>
    </location>
</feature>
<feature type="active site" description="Nucleophile" evidence="6">
    <location>
        <position position="101"/>
    </location>
</feature>
<feature type="active site" evidence="1">
    <location>
        <position position="240"/>
    </location>
</feature>
<feature type="active site" description="Proton donor" evidence="1">
    <location>
        <position position="267"/>
    </location>
</feature>
<feature type="mutagenesis site" description="Activity same as wild-type." evidence="5">
    <original>C</original>
    <variation>S</variation>
    <location>
        <position position="62"/>
    </location>
</feature>
<feature type="mutagenesis site" description="Complete inactivation." evidence="5">
    <original>S</original>
    <variation>A</variation>
    <location>
        <position position="101"/>
    </location>
</feature>
<gene>
    <name type="primary">pip</name>
</gene>
<keyword id="KW-0031">Aminopeptidase</keyword>
<keyword id="KW-0963">Cytoplasm</keyword>
<keyword id="KW-0903">Direct protein sequencing</keyword>
<keyword id="KW-0378">Hydrolase</keyword>
<keyword id="KW-0645">Protease</keyword>
<sequence>MYTEGFIDVTGGRVSFQKFDENGGGTPVIVLHGGPGSSCYSLLGLKALAKDRPVILYDQLGCGKSDRPMDTTLWRLDRFVEELAQIRQALNLDEVHILGHSWGTTLAAAYCLTKPSGVKSVIFSSPCLSAPLWEQDQKRNLKKLPLDVQETINRCEENGTTDSEEFAAAIEVFGKHFVNRLEKQPEWLEQKPSGYRNADIYNIMWGPSEFTVLGNLKNFDCTTQLKEITCPSLYTCGRFDEATPETTEYYSSLTPKSKFHVFEKSAHMPYIEEPEEYLAVIGDFLNSI</sequence>
<protein>
    <recommendedName>
        <fullName>Proline iminopeptidase</fullName>
        <shortName>PIP</shortName>
        <ecNumber>3.4.11.5</ecNumber>
    </recommendedName>
    <alternativeName>
        <fullName>Prolyl aminopeptidase</fullName>
        <shortName>PAP</shortName>
    </alternativeName>
</protein>
<reference key="1">
    <citation type="journal article" date="1992" name="J. Bacteriol.">
        <title>Cloning, sequencing, and high expression of the proline iminopeptidase gene from Bacillus coagulans.</title>
        <authorList>
            <person name="Kitazono A."/>
            <person name="Yoshimoto T."/>
            <person name="Tsuru D."/>
        </authorList>
    </citation>
    <scope>NUCLEOTIDE SEQUENCE [GENOMIC DNA]</scope>
    <scope>PROTEIN SEQUENCE OF 1-13; 20-23; 51-56; 66-73; 93-95; 182-184; 199-202 AND 283-288</scope>
    <scope>CRYSTALLIZATION</scope>
    <scope>FUNCTION</scope>
    <scope>CATALYTIC ACTIVITY</scope>
    <scope>ACTIVITY REGULATION</scope>
    <scope>BIOPHYSICOCHEMICAL PROPERTIES</scope>
</reference>
<reference key="2">
    <citation type="submission" date="1994-04" db="EMBL/GenBank/DDBJ databases">
        <authorList>
            <person name="Yoshimoto T."/>
        </authorList>
    </citation>
    <scope>SEQUENCE REVISION</scope>
</reference>
<reference key="3">
    <citation type="journal article" date="1985" name="J. Biochem.">
        <title>Proline iminopeptidase from Bacillus coagulans: purification and enzymatic properties.</title>
        <authorList>
            <person name="Yoshimoto T."/>
            <person name="Tsuru D."/>
        </authorList>
    </citation>
    <scope>FUNCTION</scope>
    <scope>CATALYTIC ACTIVITY</scope>
    <scope>ACTIVITY REGULATION</scope>
    <scope>BIOPHYSICOCHEMICAL PROPERTIES</scope>
    <scope>SUBUNIT</scope>
</reference>
<reference key="4">
    <citation type="journal article" date="1994" name="J. Biochem.">
        <title>Prolyl aminopeptidase is not a sulfhydryl enzyme: identification of the active serine residue by site-directed mutagenesis.</title>
        <authorList>
            <person name="Kitazono A."/>
            <person name="Ito K."/>
            <person name="Yoshimoto T."/>
        </authorList>
    </citation>
    <scope>CATALYTIC ACTIVITY</scope>
    <scope>MUTAGENESIS OF CYS-62 AND SER-101</scope>
</reference>
<proteinExistence type="evidence at protein level"/>